<reference key="1">
    <citation type="journal article" date="1994" name="J. Biol. Chem.">
        <title>Molecular cloning, expression, and characterization of PTPA, a protein that activates the tyrosyl phosphatase activity of protein phosphatase 2A.</title>
        <authorList>
            <person name="Cayla X."/>
            <person name="Van Hoof C."/>
            <person name="Bosch M."/>
            <person name="Waelkens E."/>
            <person name="Peeters B."/>
            <person name="Merlevede W."/>
            <person name="Goris J."/>
        </authorList>
    </citation>
    <scope>NUCLEOTIDE SEQUENCE [MRNA]</scope>
    <source>
        <tissue>Skeletal muscle</tissue>
    </source>
</reference>
<reference evidence="7" key="2">
    <citation type="journal article" date="1998" name="Biochemistry">
        <title>Functional analysis of conserved domains in the phosphotyrosyl phosphatase activator. Molecular cloning of the homologues from Drosophila melanogaster and Saccharomyces cerevisiae.</title>
        <authorList>
            <person name="Van Hoof C."/>
            <person name="Janssens V."/>
            <person name="Dinishiotu A."/>
            <person name="Merlevede W."/>
            <person name="Goris J."/>
        </authorList>
    </citation>
    <scope>FUNCTION</scope>
    <scope>MUTAGENESIS OF 146-SER--ASP-150; 151-TYR--GLU-156; 201-MET--SER-206; 208-GLY--ASP-213 AND 267-PRO--GLY-323</scope>
</reference>
<reference key="3">
    <citation type="journal article" date="2004" name="Biochem. J.">
        <title>An inactive protein phosphatase 2A population is associated with methylesterase and can be re-activated by the phosphotyrosyl phosphatase activator.</title>
        <authorList>
            <person name="Longin S."/>
            <person name="Jordens J."/>
            <person name="Martens E."/>
            <person name="Stevens I."/>
            <person name="Janssens V."/>
            <person name="Rondelez E."/>
            <person name="De Baere I."/>
            <person name="Derua R."/>
            <person name="Waelkens E."/>
            <person name="Goris J."/>
            <person name="Van Hoof C."/>
        </authorList>
    </citation>
    <scope>FUNCTION IN PP2A(I) REACTIVATION</scope>
</reference>
<reference key="4">
    <citation type="journal article" date="2006" name="J. Biol. Chem.">
        <title>The protein phosphatase 2A phosphatase activator is a novel peptidyl-prolyl cis/trans-isomerase.</title>
        <authorList>
            <person name="Jordens J."/>
            <person name="Janssens V."/>
            <person name="Longin S."/>
            <person name="Stevens I."/>
            <person name="Martens E."/>
            <person name="Bultynck G."/>
            <person name="Engelborghs Y."/>
            <person name="Lescrinier E."/>
            <person name="Waelkens E."/>
            <person name="Goris J."/>
            <person name="Van Hoof C."/>
        </authorList>
    </citation>
    <scope>CATALYTIC ACTIVITY</scope>
    <scope>FUNCTION</scope>
    <scope>MUTAGENESIS OF 208-GLY--ASP-213</scope>
</reference>
<organism>
    <name type="scientific">Oryctolagus cuniculus</name>
    <name type="common">Rabbit</name>
    <dbReference type="NCBI Taxonomy" id="9986"/>
    <lineage>
        <taxon>Eukaryota</taxon>
        <taxon>Metazoa</taxon>
        <taxon>Chordata</taxon>
        <taxon>Craniata</taxon>
        <taxon>Vertebrata</taxon>
        <taxon>Euteleostomi</taxon>
        <taxon>Mammalia</taxon>
        <taxon>Eutheria</taxon>
        <taxon>Euarchontoglires</taxon>
        <taxon>Glires</taxon>
        <taxon>Lagomorpha</taxon>
        <taxon>Leporidae</taxon>
        <taxon>Oryctolagus</taxon>
    </lineage>
</organism>
<dbReference type="EC" id="5.2.1.8" evidence="5"/>
<dbReference type="EMBL" id="X73479">
    <property type="protein sequence ID" value="CAA51874.1"/>
    <property type="molecule type" value="mRNA"/>
</dbReference>
<dbReference type="PIR" id="B54021">
    <property type="entry name" value="B54021"/>
</dbReference>
<dbReference type="RefSeq" id="NP_001076149.1">
    <property type="nucleotide sequence ID" value="NM_001082680.1"/>
</dbReference>
<dbReference type="RefSeq" id="XP_069927506.1">
    <property type="nucleotide sequence ID" value="XM_070071405.1"/>
</dbReference>
<dbReference type="SMR" id="Q28717"/>
<dbReference type="FunCoup" id="Q28717">
    <property type="interactions" value="1716"/>
</dbReference>
<dbReference type="STRING" id="9986.ENSOCUP00000044909"/>
<dbReference type="PaxDb" id="9986-ENSOCUP00000021659"/>
<dbReference type="GeneID" id="100009404"/>
<dbReference type="KEGG" id="ocu:100009404"/>
<dbReference type="CTD" id="5524"/>
<dbReference type="eggNOG" id="KOG2867">
    <property type="taxonomic scope" value="Eukaryota"/>
</dbReference>
<dbReference type="InParanoid" id="Q28717"/>
<dbReference type="OrthoDB" id="16120at2759"/>
<dbReference type="Proteomes" id="UP000001811">
    <property type="component" value="Unplaced"/>
</dbReference>
<dbReference type="GO" id="GO:1904949">
    <property type="term" value="C:ATPase complex"/>
    <property type="evidence" value="ECO:0000250"/>
    <property type="project" value="HGNC-UCL"/>
</dbReference>
<dbReference type="GO" id="GO:0005737">
    <property type="term" value="C:cytoplasm"/>
    <property type="evidence" value="ECO:0007669"/>
    <property type="project" value="UniProtKB-SubCell"/>
</dbReference>
<dbReference type="GO" id="GO:0005634">
    <property type="term" value="C:nucleus"/>
    <property type="evidence" value="ECO:0007669"/>
    <property type="project" value="UniProtKB-SubCell"/>
</dbReference>
<dbReference type="GO" id="GO:0000159">
    <property type="term" value="C:protein phosphatase type 2A complex"/>
    <property type="evidence" value="ECO:0000250"/>
    <property type="project" value="BHF-UCL"/>
</dbReference>
<dbReference type="GO" id="GO:0005524">
    <property type="term" value="F:ATP binding"/>
    <property type="evidence" value="ECO:0000250"/>
    <property type="project" value="HGNC-UCL"/>
</dbReference>
<dbReference type="GO" id="GO:0046872">
    <property type="term" value="F:metal ion binding"/>
    <property type="evidence" value="ECO:0007669"/>
    <property type="project" value="UniProtKB-KW"/>
</dbReference>
<dbReference type="GO" id="GO:0003755">
    <property type="term" value="F:peptidyl-prolyl cis-trans isomerase activity"/>
    <property type="evidence" value="ECO:0007669"/>
    <property type="project" value="UniProtKB-KW"/>
</dbReference>
<dbReference type="GO" id="GO:0042803">
    <property type="term" value="F:protein homodimerization activity"/>
    <property type="evidence" value="ECO:0000250"/>
    <property type="project" value="HGNC-UCL"/>
</dbReference>
<dbReference type="GO" id="GO:0051721">
    <property type="term" value="F:protein phosphatase 2A binding"/>
    <property type="evidence" value="ECO:0000250"/>
    <property type="project" value="HGNC-UCL"/>
</dbReference>
<dbReference type="GO" id="GO:0019888">
    <property type="term" value="F:protein phosphatase regulator activity"/>
    <property type="evidence" value="ECO:0000250"/>
    <property type="project" value="HGNC-UCL"/>
</dbReference>
<dbReference type="GO" id="GO:0008160">
    <property type="term" value="F:protein tyrosine phosphatase activator activity"/>
    <property type="evidence" value="ECO:0000250"/>
    <property type="project" value="HGNC-UCL"/>
</dbReference>
<dbReference type="GO" id="GO:0007052">
    <property type="term" value="P:mitotic spindle organization"/>
    <property type="evidence" value="ECO:0007669"/>
    <property type="project" value="TreeGrafter"/>
</dbReference>
<dbReference type="CDD" id="cd04087">
    <property type="entry name" value="PTPA"/>
    <property type="match status" value="1"/>
</dbReference>
<dbReference type="FunFam" id="1.20.120.1150:FF:000001">
    <property type="entry name" value="Serine/threonine-protein phosphatase 2A activator"/>
    <property type="match status" value="1"/>
</dbReference>
<dbReference type="Gene3D" id="1.20.120.1150">
    <property type="match status" value="1"/>
</dbReference>
<dbReference type="InterPro" id="IPR004327">
    <property type="entry name" value="Phstyr_phstse_ac"/>
</dbReference>
<dbReference type="InterPro" id="IPR043170">
    <property type="entry name" value="PTPA_C_lid"/>
</dbReference>
<dbReference type="InterPro" id="IPR037218">
    <property type="entry name" value="PTPA_sf"/>
</dbReference>
<dbReference type="PANTHER" id="PTHR10012">
    <property type="entry name" value="SERINE/THREONINE-PROTEIN PHOSPHATASE 2A REGULATORY SUBUNIT B"/>
    <property type="match status" value="1"/>
</dbReference>
<dbReference type="PANTHER" id="PTHR10012:SF0">
    <property type="entry name" value="SERINE_THREONINE-PROTEIN PHOSPHATASE 2A ACTIVATOR"/>
    <property type="match status" value="1"/>
</dbReference>
<dbReference type="Pfam" id="PF03095">
    <property type="entry name" value="PTPA"/>
    <property type="match status" value="1"/>
</dbReference>
<dbReference type="PIRSF" id="PIRSF016325">
    <property type="entry name" value="Phstyr_phstse_ac"/>
    <property type="match status" value="1"/>
</dbReference>
<dbReference type="SUPFAM" id="SSF140984">
    <property type="entry name" value="PTPA-like"/>
    <property type="match status" value="1"/>
</dbReference>
<feature type="initiator methionine" description="Removed" evidence="2">
    <location>
        <position position="1"/>
    </location>
</feature>
<feature type="chain" id="PRO_0000071526" description="Serine/threonine-protein phosphatase 2A activator">
    <location>
        <begin position="2"/>
        <end position="323"/>
    </location>
</feature>
<feature type="region of interest" description="Disordered" evidence="3">
    <location>
        <begin position="1"/>
        <end position="21"/>
    </location>
</feature>
<feature type="binding site" evidence="2">
    <location>
        <position position="148"/>
    </location>
    <ligand>
        <name>ATP</name>
        <dbReference type="ChEBI" id="CHEBI:30616"/>
    </ligand>
</feature>
<feature type="binding site" evidence="2">
    <location>
        <position position="153"/>
    </location>
    <ligand>
        <name>ATP</name>
        <dbReference type="ChEBI" id="CHEBI:30616"/>
    </ligand>
</feature>
<feature type="binding site" evidence="2">
    <location>
        <position position="154"/>
    </location>
    <ligand>
        <name>ATP</name>
        <dbReference type="ChEBI" id="CHEBI:30616"/>
    </ligand>
</feature>
<feature type="binding site" evidence="2">
    <location>
        <position position="208"/>
    </location>
    <ligand>
        <name>Mg(2+)</name>
        <dbReference type="ChEBI" id="CHEBI:18420"/>
    </ligand>
</feature>
<feature type="binding site" evidence="2">
    <location>
        <position position="214"/>
    </location>
    <ligand>
        <name>Mg(2+)</name>
        <dbReference type="ChEBI" id="CHEBI:18420"/>
    </ligand>
</feature>
<feature type="binding site" evidence="2">
    <location>
        <position position="304"/>
    </location>
    <ligand>
        <name>ATP</name>
        <dbReference type="ChEBI" id="CHEBI:30616"/>
    </ligand>
</feature>
<feature type="binding site" evidence="2">
    <location>
        <position position="307"/>
    </location>
    <ligand>
        <name>ATP</name>
        <dbReference type="ChEBI" id="CHEBI:30616"/>
    </ligand>
</feature>
<feature type="binding site" evidence="2">
    <location>
        <position position="308"/>
    </location>
    <ligand>
        <name>ATP</name>
        <dbReference type="ChEBI" id="CHEBI:30616"/>
    </ligand>
</feature>
<feature type="modified residue" description="N-acetylalanine" evidence="2">
    <location>
        <position position="2"/>
    </location>
</feature>
<feature type="mutagenesis site" description="Loss of PP2A(i) activation." evidence="6">
    <location>
        <begin position="146"/>
        <end position="150"/>
    </location>
</feature>
<feature type="mutagenesis site" description="Loss of PP2A(i) activation." evidence="6">
    <location>
        <begin position="151"/>
        <end position="156"/>
    </location>
</feature>
<feature type="mutagenesis site" description="Reduces activation of PP2A(i)." evidence="6">
    <location>
        <begin position="201"/>
        <end position="206"/>
    </location>
</feature>
<feature type="mutagenesis site" description="Greatly reduces activation of PP2A(i)." evidence="5 6">
    <location>
        <begin position="208"/>
        <end position="213"/>
    </location>
</feature>
<feature type="mutagenesis site" description="Loss of PP2A(i) activation." evidence="6">
    <location>
        <begin position="267"/>
        <end position="323"/>
    </location>
</feature>
<evidence type="ECO:0000250" key="1">
    <source>
        <dbReference type="UniProtKB" id="P58389"/>
    </source>
</evidence>
<evidence type="ECO:0000250" key="2">
    <source>
        <dbReference type="UniProtKB" id="Q15257"/>
    </source>
</evidence>
<evidence type="ECO:0000256" key="3">
    <source>
        <dbReference type="SAM" id="MobiDB-lite"/>
    </source>
</evidence>
<evidence type="ECO:0000269" key="4">
    <source>
    </source>
</evidence>
<evidence type="ECO:0000269" key="5">
    <source>
    </source>
</evidence>
<evidence type="ECO:0000269" key="6">
    <source>
    </source>
</evidence>
<evidence type="ECO:0000305" key="7"/>
<comment type="function">
    <text evidence="2 4 5">PPIases accelerate the folding of proteins. It catalyzes the cis-trans isomerization of proline imidic peptide bonds in oligopeptides (PubMed:16380387). Acts as a regulatory subunit for serine/threonine-protein phosphatase 2A (PP2A) (By similarity). Modulates PP2A activity or substrate specificity, probably by inducing a conformational change in the catalytic subunit, a proposed direct target of the PPIase (PubMed:14748741). Can reactivate inactive phosphatase PP2A-phosphatase methylesterase complexes (PP2A(i)) in presence of ATP and Mg(2+) (By similarity). Reversibly stimulates the variable phosphotyrosyl phosphatase activity of PP2A core heterodimer PP2A(D) in presence of ATP and Mg(2+) (in vitro). The phosphotyrosyl phosphatase activity is dependent of an ATPase activity of the PP2A(D):PPP2R4 complex (By similarity). Is involved in apoptosis; the function appears to be independent from PP2A (By similarity).</text>
</comment>
<comment type="catalytic activity">
    <reaction evidence="5">
        <text>[protein]-peptidylproline (omega=180) = [protein]-peptidylproline (omega=0)</text>
        <dbReference type="Rhea" id="RHEA:16237"/>
        <dbReference type="Rhea" id="RHEA-COMP:10747"/>
        <dbReference type="Rhea" id="RHEA-COMP:10748"/>
        <dbReference type="ChEBI" id="CHEBI:83833"/>
        <dbReference type="ChEBI" id="CHEBI:83834"/>
        <dbReference type="EC" id="5.2.1.8"/>
    </reaction>
</comment>
<comment type="subunit">
    <text evidence="1 2">Associates with the serine/threonine-protein phosphatase 2A PP2A(D) heterodimeric core enzyme, composed of a 36 kDa catalytic subunit (subunit C) and a 65 kDa constant regulatory subunit (PR65 or subunit A) (By similarity). Interacts with the catalytic subunit PPP2CA (via C-terminus) (By similarity). Interacts with PPP2CB (By similarity).</text>
</comment>
<comment type="subcellular location">
    <subcellularLocation>
        <location evidence="2">Cytoplasm</location>
    </subcellularLocation>
    <subcellularLocation>
        <location evidence="2">Nucleus</location>
    </subcellularLocation>
</comment>
<comment type="tissue specificity">
    <text>Widely expressed.</text>
</comment>
<comment type="similarity">
    <text evidence="7">Belongs to the PTPA-type PPIase family.</text>
</comment>
<proteinExistence type="evidence at protein level"/>
<sequence>MAEGERQPPPDSSEETPPAAQNFVIPKKEIHTVPDMGKWKRSQAYADYIGFILTLNEGVKGKKLSFEYKVSEAVEKLLALLDTLDRWIDETPPVDQPSRFGNKAYRTWYAKLDEEAEGLVAAVVPAHLAAAVPEVAVYLKESVGNSTRIDYGTGHEAAFAAFLCCLCKIGVLRVDDQIAIVFKVFNRYLEVMRKLQKTYRMEPAGSQGVWGLDDFQFLPFIWGSSQLIDHPFLEPRHFVDEKAVNENHKDYMFLECILFITEMKTGPFAEHSNQLWNISAVPSWSKVNQGLIRMYKAECLEKFPVIQHFKFGSLLPIHPVTSG</sequence>
<accession>Q28717</accession>
<protein>
    <recommendedName>
        <fullName>Serine/threonine-protein phosphatase 2A activator</fullName>
        <ecNumber evidence="5">5.2.1.8</ecNumber>
    </recommendedName>
    <alternativeName>
        <fullName>PP2A, subunit B', PR53 isoform</fullName>
    </alternativeName>
    <alternativeName>
        <fullName>Phosphotyrosyl phosphatase activator</fullName>
        <shortName>PTPA</shortName>
    </alternativeName>
    <alternativeName>
        <fullName>Serine/threonine-protein phosphatase 2A regulatory subunit 4</fullName>
    </alternativeName>
    <alternativeName>
        <fullName>Serine/threonine-protein phosphatase 2A regulatory subunit B'</fullName>
    </alternativeName>
</protein>
<name>PTPA_RABIT</name>
<gene>
    <name type="primary">PTPA</name>
    <name type="synonym">PPP2R4</name>
</gene>
<keyword id="KW-0007">Acetylation</keyword>
<keyword id="KW-0067">ATP-binding</keyword>
<keyword id="KW-0963">Cytoplasm</keyword>
<keyword id="KW-0413">Isomerase</keyword>
<keyword id="KW-0460">Magnesium</keyword>
<keyword id="KW-0479">Metal-binding</keyword>
<keyword id="KW-0547">Nucleotide-binding</keyword>
<keyword id="KW-0539">Nucleus</keyword>
<keyword id="KW-1185">Reference proteome</keyword>
<keyword id="KW-0697">Rotamase</keyword>